<proteinExistence type="evidence at protein level"/>
<protein>
    <recommendedName>
        <fullName evidence="7 12">Immunoglobulin kappa variable 3-20</fullName>
    </recommendedName>
    <alternativeName>
        <fullName evidence="14">Ig kappa chain V-III region B6</fullName>
    </alternativeName>
    <alternativeName>
        <fullName evidence="16">Ig kappa chain V-III region GOL</fullName>
    </alternativeName>
    <alternativeName>
        <fullName evidence="17">Ig kappa chain V-III region HAH</fullName>
    </alternativeName>
    <alternativeName>
        <fullName evidence="17">Ig kappa chain V-III region HIC</fullName>
    </alternativeName>
    <alternativeName>
        <fullName evidence="15">Ig kappa chain V-III region IARC/BL41</fullName>
    </alternativeName>
    <alternativeName>
        <fullName evidence="19">Ig kappa chain V-III region NG9</fullName>
    </alternativeName>
    <alternativeName>
        <fullName evidence="20">Ig kappa chain V-III region SIE</fullName>
    </alternativeName>
    <alternativeName>
        <fullName evidence="18">Ig kappa chain V-III region Ti</fullName>
    </alternativeName>
    <alternativeName>
        <fullName evidence="20">Ig kappa chain V-III region WOL</fullName>
    </alternativeName>
</protein>
<keyword id="KW-0002">3D-structure</keyword>
<keyword id="KW-1064">Adaptive immunity</keyword>
<keyword id="KW-1003">Cell membrane</keyword>
<keyword id="KW-0903">Direct protein sequencing</keyword>
<keyword id="KW-1015">Disulfide bond</keyword>
<keyword id="KW-0391">Immunity</keyword>
<keyword id="KW-1280">Immunoglobulin</keyword>
<keyword id="KW-0393">Immunoglobulin domain</keyword>
<keyword id="KW-0472">Membrane</keyword>
<keyword id="KW-1267">Proteomics identification</keyword>
<keyword id="KW-1185">Reference proteome</keyword>
<keyword id="KW-0964">Secreted</keyword>
<keyword id="KW-0732">Signal</keyword>
<accession>P01619</accession>
<accession>A0A0B4J1Z6</accession>
<accession>P01620</accession>
<accession>P01621</accession>
<accession>P01622</accession>
<accession>P01623</accession>
<accession>P04206</accession>
<accession>P06311</accession>
<accession>P18135</accession>
<accession>P18136</accession>
<gene>
    <name evidence="7 12" type="primary">IGKV3-20</name>
</gene>
<dbReference type="EMBL" id="Z00021">
    <property type="protein sequence ID" value="CAA77316.1"/>
    <property type="status" value="ALT_SEQ"/>
    <property type="molecule type" value="Genomic_DNA"/>
</dbReference>
<dbReference type="EMBL" id="AC245015">
    <property type="status" value="NOT_ANNOTATED_CDS"/>
    <property type="molecule type" value="Genomic_DNA"/>
</dbReference>
<dbReference type="PIR" id="A01891">
    <property type="entry name" value="K3HUB6"/>
</dbReference>
<dbReference type="PIR" id="A01892">
    <property type="entry name" value="K3HUSI"/>
</dbReference>
<dbReference type="PIR" id="A01893">
    <property type="entry name" value="K3HUGO"/>
</dbReference>
<dbReference type="PIR" id="A01894">
    <property type="entry name" value="K3HUNG"/>
</dbReference>
<dbReference type="PIR" id="A01895">
    <property type="entry name" value="K3HUTI"/>
</dbReference>
<dbReference type="PIR" id="A01896">
    <property type="entry name" value="K3HUWL"/>
</dbReference>
<dbReference type="PIR" id="A01899">
    <property type="entry name" value="K3HU41"/>
</dbReference>
<dbReference type="PIR" id="C27594">
    <property type="entry name" value="C27594"/>
</dbReference>
<dbReference type="PIR" id="E30607">
    <property type="entry name" value="E30607"/>
</dbReference>
<dbReference type="PIR" id="PL0021">
    <property type="entry name" value="K3HUHI"/>
</dbReference>
<dbReference type="PIR" id="PL0022">
    <property type="entry name" value="K3HUHA"/>
</dbReference>
<dbReference type="PDB" id="4LRN">
    <property type="method" value="X-ray"/>
    <property type="resolution" value="1.89 A"/>
    <property type="chains" value="L=21-116"/>
</dbReference>
<dbReference type="PDB" id="4M62">
    <property type="method" value="X-ray"/>
    <property type="resolution" value="1.80 A"/>
    <property type="chains" value="L/M=21-116"/>
</dbReference>
<dbReference type="PDB" id="4M8Q">
    <property type="method" value="X-ray"/>
    <property type="resolution" value="2.89 A"/>
    <property type="chains" value="B/L=21-116"/>
</dbReference>
<dbReference type="PDB" id="4OB5">
    <property type="method" value="X-ray"/>
    <property type="resolution" value="1.70 A"/>
    <property type="chains" value="L=21-116"/>
</dbReference>
<dbReference type="PDB" id="4ODX">
    <property type="method" value="X-ray"/>
    <property type="resolution" value="3.10 A"/>
    <property type="chains" value="B/L=21-116"/>
</dbReference>
<dbReference type="PDBsum" id="4LRN"/>
<dbReference type="PDBsum" id="4M62"/>
<dbReference type="PDBsum" id="4M8Q"/>
<dbReference type="PDBsum" id="4OB5"/>
<dbReference type="PDBsum" id="4ODX"/>
<dbReference type="EMDB" id="EMD-13415"/>
<dbReference type="EMDB" id="EMD-13869"/>
<dbReference type="EMDB" id="EMD-14887"/>
<dbReference type="EMDB" id="EMD-15269"/>
<dbReference type="EMDB" id="EMD-15270"/>
<dbReference type="EMDB" id="EMD-15271"/>
<dbReference type="EMDB" id="EMD-15273"/>
<dbReference type="EMDB" id="EMD-16375"/>
<dbReference type="EMDB" id="EMD-21864"/>
<dbReference type="EMDB" id="EMD-21865"/>
<dbReference type="EMDB" id="EMD-22659"/>
<dbReference type="EMDB" id="EMD-22660"/>
<dbReference type="EMDB" id="EMD-22668"/>
<dbReference type="EMDB" id="EMD-23579"/>
<dbReference type="EMDB" id="EMD-23580"/>
<dbReference type="EMDB" id="EMD-23582"/>
<dbReference type="EMDB" id="EMD-23816"/>
<dbReference type="EMDB" id="EMD-24190"/>
<dbReference type="EMDB" id="EMD-24236"/>
<dbReference type="EMDB" id="EMD-24649"/>
<dbReference type="EMDB" id="EMD-24695"/>
<dbReference type="EMDB" id="EMD-24696"/>
<dbReference type="EMDB" id="EMD-25039"/>
<dbReference type="EMDB" id="EMD-25040"/>
<dbReference type="EMDB" id="EMD-25263"/>
<dbReference type="EMDB" id="EMD-25265"/>
<dbReference type="EMDB" id="EMD-25266"/>
<dbReference type="EMDB" id="EMD-25733"/>
<dbReference type="EMDB" id="EMD-25794"/>
<dbReference type="EMDB" id="EMD-25808"/>
<dbReference type="EMDB" id="EMD-25992"/>
<dbReference type="EMDB" id="EMD-27270"/>
<dbReference type="EMDB" id="EMD-27318"/>
<dbReference type="EMDB" id="EMD-27798"/>
<dbReference type="EMDB" id="EMD-27799"/>
<dbReference type="EMDB" id="EMD-28729"/>
<dbReference type="EMDB" id="EMD-32422"/>
<dbReference type="EMDB" id="EMD-32423"/>
<dbReference type="EMDB" id="EMD-32444"/>
<dbReference type="EMDB" id="EMD-32445"/>
<dbReference type="EMDB" id="EMD-32446"/>
<dbReference type="EMDB" id="EMD-32447"/>
<dbReference type="EMDB" id="EMD-32839"/>
<dbReference type="EMDB" id="EMD-33220"/>
<dbReference type="EMDB" id="EMD-33221"/>
<dbReference type="EMDB" id="EMD-33222"/>
<dbReference type="EMDB" id="EMD-33709"/>
<dbReference type="EMDB" id="EMD-33892"/>
<dbReference type="EMDB" id="EMD-34228"/>
<dbReference type="EMDB" id="EMD-37930"/>
<dbReference type="EMDB" id="EMD-38616"/>
<dbReference type="EMDB" id="EMD-39686"/>
<dbReference type="EMDB" id="EMD-39839"/>
<dbReference type="EMDB" id="EMD-40273"/>
<dbReference type="EMDB" id="EMD-41809"/>
<dbReference type="EMDB" id="EMD-42528"/>
<dbReference type="EMDB" id="EMD-42529"/>
<dbReference type="EMDB" id="EMD-42530"/>
<dbReference type="EMDB" id="EMD-42970"/>
<dbReference type="EMDB" id="EMD-43658"/>
<dbReference type="EMDB" id="EMD-43660"/>
<dbReference type="EMDB" id="EMD-44901"/>
<dbReference type="EMDB" id="EMD-6793"/>
<dbReference type="EMDB" id="EMD-7089"/>
<dbReference type="EMDB" id="EMD-7460"/>
<dbReference type="EMDB" id="EMD-7621"/>
<dbReference type="EMDB" id="EMD-7622"/>
<dbReference type="EMDB" id="EMD-7859"/>
<dbReference type="EMDB" id="EMD-7861"/>
<dbReference type="EMDB" id="EMD-7862"/>
<dbReference type="EMDB" id="EMD-7863"/>
<dbReference type="EMDB" id="EMD-7864"/>
<dbReference type="EMDB" id="EMD-7865"/>
<dbReference type="EMDB" id="EMD-7866"/>
<dbReference type="EMDB" id="EMD-9189"/>
<dbReference type="EMDB" id="EMD-9319"/>
<dbReference type="EMDB" id="EMD-9320"/>
<dbReference type="SMR" id="P01619"/>
<dbReference type="FunCoup" id="P01619">
    <property type="interactions" value="444"/>
</dbReference>
<dbReference type="IntAct" id="P01619">
    <property type="interactions" value="5"/>
</dbReference>
<dbReference type="MINT" id="P01619"/>
<dbReference type="DrugBank" id="DB09130">
    <property type="generic name" value="Copper"/>
</dbReference>
<dbReference type="DrugBank" id="DB01593">
    <property type="generic name" value="Zinc"/>
</dbReference>
<dbReference type="DrugBank" id="DB14487">
    <property type="generic name" value="Zinc acetate"/>
</dbReference>
<dbReference type="IMGT_GENE-DB" id="IGKV3-20"/>
<dbReference type="BioMuta" id="IGKV3-20"/>
<dbReference type="DMDM" id="125801"/>
<dbReference type="jPOST" id="P01619"/>
<dbReference type="MassIVE" id="P01619"/>
<dbReference type="PRIDE" id="P01619"/>
<dbReference type="Pumba" id="P01619"/>
<dbReference type="TopDownProteomics" id="P01619"/>
<dbReference type="Ensembl" id="ENST00000492167.1">
    <property type="protein sequence ID" value="ENSP00000418649.1"/>
    <property type="gene ID" value="ENSG00000239951.1"/>
</dbReference>
<dbReference type="Ensembl" id="ENST00000632822.1">
    <property type="protein sequence ID" value="ENSP00000487628.1"/>
    <property type="gene ID" value="ENSG00000282402.1"/>
</dbReference>
<dbReference type="AGR" id="HGNC:5817"/>
<dbReference type="GeneCards" id="IGKV3-20"/>
<dbReference type="HGNC" id="HGNC:5817">
    <property type="gene designation" value="IGKV3-20"/>
</dbReference>
<dbReference type="HPA" id="ENSG00000239951">
    <property type="expression patterns" value="Tissue enhanced (intestine, lymphoid tissue)"/>
</dbReference>
<dbReference type="neXtProt" id="NX_P01619"/>
<dbReference type="OpenTargets" id="ENSG00000239951"/>
<dbReference type="VEuPathDB" id="HostDB:ENSG00000239951"/>
<dbReference type="GeneTree" id="ENSGT00940000154413"/>
<dbReference type="InParanoid" id="P01619"/>
<dbReference type="OMA" id="GHERKQK"/>
<dbReference type="OrthoDB" id="9538307at2759"/>
<dbReference type="PAN-GO" id="P01619">
    <property type="GO annotations" value="3 GO annotations based on evolutionary models"/>
</dbReference>
<dbReference type="PhylomeDB" id="P01619"/>
<dbReference type="PathwayCommons" id="P01619"/>
<dbReference type="Reactome" id="R-HSA-166663">
    <property type="pathway name" value="Initial triggering of complement"/>
</dbReference>
<dbReference type="Reactome" id="R-HSA-173623">
    <property type="pathway name" value="Classical antibody-mediated complement activation"/>
</dbReference>
<dbReference type="Reactome" id="R-HSA-198933">
    <property type="pathway name" value="Immunoregulatory interactions between a Lymphoid and a non-Lymphoid cell"/>
</dbReference>
<dbReference type="Reactome" id="R-HSA-202733">
    <property type="pathway name" value="Cell surface interactions at the vascular wall"/>
</dbReference>
<dbReference type="Reactome" id="R-HSA-2029481">
    <property type="pathway name" value="FCGR activation"/>
</dbReference>
<dbReference type="Reactome" id="R-HSA-2029482">
    <property type="pathway name" value="Regulation of actin dynamics for phagocytic cup formation"/>
</dbReference>
<dbReference type="Reactome" id="R-HSA-2029485">
    <property type="pathway name" value="Role of phospholipids in phagocytosis"/>
</dbReference>
<dbReference type="Reactome" id="R-HSA-2168880">
    <property type="pathway name" value="Scavenging of heme from plasma"/>
</dbReference>
<dbReference type="Reactome" id="R-HSA-2454202">
    <property type="pathway name" value="Fc epsilon receptor (FCERI) signaling"/>
</dbReference>
<dbReference type="Reactome" id="R-HSA-2730905">
    <property type="pathway name" value="Role of LAT2/NTAL/LAB on calcium mobilization"/>
</dbReference>
<dbReference type="Reactome" id="R-HSA-2871796">
    <property type="pathway name" value="FCERI mediated MAPK activation"/>
</dbReference>
<dbReference type="Reactome" id="R-HSA-2871809">
    <property type="pathway name" value="FCERI mediated Ca+2 mobilization"/>
</dbReference>
<dbReference type="Reactome" id="R-HSA-2871837">
    <property type="pathway name" value="FCERI mediated NF-kB activation"/>
</dbReference>
<dbReference type="Reactome" id="R-HSA-5690714">
    <property type="pathway name" value="CD22 mediated BCR regulation"/>
</dbReference>
<dbReference type="Reactome" id="R-HSA-9664323">
    <property type="pathway name" value="FCGR3A-mediated IL10 synthesis"/>
</dbReference>
<dbReference type="Reactome" id="R-HSA-9664422">
    <property type="pathway name" value="FCGR3A-mediated phagocytosis"/>
</dbReference>
<dbReference type="Reactome" id="R-HSA-9679191">
    <property type="pathway name" value="Potential therapeutics for SARS"/>
</dbReference>
<dbReference type="Reactome" id="R-HSA-977606">
    <property type="pathway name" value="Regulation of Complement cascade"/>
</dbReference>
<dbReference type="Reactome" id="R-HSA-983695">
    <property type="pathway name" value="Antigen activates B Cell Receptor (BCR) leading to generation of second messengers"/>
</dbReference>
<dbReference type="SignaLink" id="P01619"/>
<dbReference type="EvolutionaryTrace" id="P01619"/>
<dbReference type="Pharos" id="P01619">
    <property type="development level" value="Tbio"/>
</dbReference>
<dbReference type="PRO" id="PR:P01619"/>
<dbReference type="Proteomes" id="UP000005640">
    <property type="component" value="Chromosome 2"/>
</dbReference>
<dbReference type="RNAct" id="P01619">
    <property type="molecule type" value="protein"/>
</dbReference>
<dbReference type="Bgee" id="ENSG00000239951">
    <property type="expression patterns" value="Expressed in rectum and 89 other cell types or tissues"/>
</dbReference>
<dbReference type="GO" id="GO:0072562">
    <property type="term" value="C:blood microparticle"/>
    <property type="evidence" value="ECO:0007005"/>
    <property type="project" value="UniProtKB"/>
</dbReference>
<dbReference type="GO" id="GO:0070062">
    <property type="term" value="C:extracellular exosome"/>
    <property type="evidence" value="ECO:0007005"/>
    <property type="project" value="UniProtKB"/>
</dbReference>
<dbReference type="GO" id="GO:0005576">
    <property type="term" value="C:extracellular region"/>
    <property type="evidence" value="ECO:0000304"/>
    <property type="project" value="Reactome"/>
</dbReference>
<dbReference type="GO" id="GO:0005615">
    <property type="term" value="C:extracellular space"/>
    <property type="evidence" value="ECO:0000314"/>
    <property type="project" value="UniProtKB"/>
</dbReference>
<dbReference type="GO" id="GO:0019814">
    <property type="term" value="C:immunoglobulin complex"/>
    <property type="evidence" value="ECO:0000318"/>
    <property type="project" value="GO_Central"/>
</dbReference>
<dbReference type="GO" id="GO:0071748">
    <property type="term" value="C:monomeric IgA immunoglobulin complex"/>
    <property type="evidence" value="ECO:0000314"/>
    <property type="project" value="UniProtKB"/>
</dbReference>
<dbReference type="GO" id="GO:0071756">
    <property type="term" value="C:pentameric IgM immunoglobulin complex"/>
    <property type="evidence" value="ECO:0000314"/>
    <property type="project" value="UniProtKB"/>
</dbReference>
<dbReference type="GO" id="GO:0005886">
    <property type="term" value="C:plasma membrane"/>
    <property type="evidence" value="ECO:0000304"/>
    <property type="project" value="Reactome"/>
</dbReference>
<dbReference type="GO" id="GO:0071751">
    <property type="term" value="C:secretory IgA immunoglobulin complex"/>
    <property type="evidence" value="ECO:0000314"/>
    <property type="project" value="UniProtKB"/>
</dbReference>
<dbReference type="GO" id="GO:0003823">
    <property type="term" value="F:antigen binding"/>
    <property type="evidence" value="ECO:0000303"/>
    <property type="project" value="UniProtKB"/>
</dbReference>
<dbReference type="GO" id="GO:0002250">
    <property type="term" value="P:adaptive immune response"/>
    <property type="evidence" value="ECO:0007669"/>
    <property type="project" value="UniProtKB-KW"/>
</dbReference>
<dbReference type="GO" id="GO:0019731">
    <property type="term" value="P:antibacterial humoral response"/>
    <property type="evidence" value="ECO:0000314"/>
    <property type="project" value="UniProtKB"/>
</dbReference>
<dbReference type="GO" id="GO:0003094">
    <property type="term" value="P:glomerular filtration"/>
    <property type="evidence" value="ECO:0000315"/>
    <property type="project" value="UniProtKB"/>
</dbReference>
<dbReference type="GO" id="GO:0006955">
    <property type="term" value="P:immune response"/>
    <property type="evidence" value="ECO:0000318"/>
    <property type="project" value="GO_Central"/>
</dbReference>
<dbReference type="CDD" id="cd04980">
    <property type="entry name" value="IgV_L_kappa"/>
    <property type="match status" value="1"/>
</dbReference>
<dbReference type="FunFam" id="2.60.40.10:FF:000350">
    <property type="entry name" value="Immunoglobulin kappa chain variable 18-36"/>
    <property type="match status" value="1"/>
</dbReference>
<dbReference type="Gene3D" id="2.60.40.10">
    <property type="entry name" value="Immunoglobulins"/>
    <property type="match status" value="1"/>
</dbReference>
<dbReference type="InterPro" id="IPR007110">
    <property type="entry name" value="Ig-like_dom"/>
</dbReference>
<dbReference type="InterPro" id="IPR036179">
    <property type="entry name" value="Ig-like_dom_sf"/>
</dbReference>
<dbReference type="InterPro" id="IPR013783">
    <property type="entry name" value="Ig-like_fold"/>
</dbReference>
<dbReference type="InterPro" id="IPR003599">
    <property type="entry name" value="Ig_sub"/>
</dbReference>
<dbReference type="InterPro" id="IPR013106">
    <property type="entry name" value="Ig_V-set"/>
</dbReference>
<dbReference type="InterPro" id="IPR050150">
    <property type="entry name" value="IgV_Light_Chain"/>
</dbReference>
<dbReference type="PANTHER" id="PTHR23267">
    <property type="entry name" value="IMMUNOGLOBULIN LIGHT CHAIN"/>
    <property type="match status" value="1"/>
</dbReference>
<dbReference type="Pfam" id="PF07686">
    <property type="entry name" value="V-set"/>
    <property type="match status" value="1"/>
</dbReference>
<dbReference type="SMART" id="SM00409">
    <property type="entry name" value="IG"/>
    <property type="match status" value="1"/>
</dbReference>
<dbReference type="SMART" id="SM00406">
    <property type="entry name" value="IGv"/>
    <property type="match status" value="1"/>
</dbReference>
<dbReference type="SUPFAM" id="SSF48726">
    <property type="entry name" value="Immunoglobulin"/>
    <property type="match status" value="1"/>
</dbReference>
<dbReference type="PROSITE" id="PS50835">
    <property type="entry name" value="IG_LIKE"/>
    <property type="match status" value="1"/>
</dbReference>
<comment type="function">
    <text evidence="8 9 10 11">V region of the variable domain of immunoglobulin light chains that participates in the antigen recognition (PubMed:24600447). Immunoglobulins, also known as antibodies, are membrane-bound or secreted glycoproteins produced by B lymphocytes. In the recognition phase of humoral immunity, the membrane-bound immunoglobulins serve as receptors which, upon binding of a specific antigen, trigger the clonal expansion and differentiation of B lymphocytes into immunoglobulins-secreting plasma cells. Secreted immunoglobulins mediate the effector phase of humoral immunity, which results in the elimination of bound antigens (PubMed:20176268, PubMed:22158414). The antigen binding site is formed by the variable domain of one heavy chain, together with that of its associated light chain. Thus, each immunoglobulin has two antigen binding sites with remarkable affinity for a particular antigen. The variable domains are assembled by a process called V-(D)-J rearrangement and can then be subjected to somatic hypermutations which, after exposure to antigen and selection, allow affinity maturation for a particular antigen (PubMed:17576170, PubMed:20176268).</text>
</comment>
<comment type="subunit">
    <text evidence="9">Immunoglobulins are composed of two identical heavy chains and two identical light chains; disulfide-linked.</text>
</comment>
<comment type="subcellular location">
    <subcellularLocation>
        <location evidence="9 10">Secreted</location>
    </subcellularLocation>
    <subcellularLocation>
        <location evidence="9 10">Cell membrane</location>
    </subcellularLocation>
</comment>
<comment type="polymorphism">
    <text>There are several alleles. The sequence shown is that of IMGT allele IGKV3-20*01.</text>
</comment>
<comment type="caution">
    <text evidence="13">For an example of a full-length immunoglobulin kappa light chain see AC P0DOX7.</text>
</comment>
<comment type="sequence caution" evidence="13">
    <conflict type="miscellaneous discrepancy">
        <sequence resource="EMBL-CDS" id="CAA77316"/>
    </conflict>
    <text>Chimeric DNA. A chimeric DNA corresponding to regions V and J of immunoglobulin kappa light chain.</text>
</comment>
<sequence>METPAQLLFLLLLWLPDTTGEIVLTQSPGTLSLSPGERATLSCRASQSVSSSYLAWYQQKPGQAPRLLIYGASSRATGIPDRFSGSGSGTDFTLTISRLEPEDFAVYYCQQYGSSP</sequence>
<name>KV320_HUMAN</name>
<feature type="signal peptide" evidence="3 4 5 6">
    <location>
        <begin position="1"/>
        <end position="20"/>
    </location>
</feature>
<feature type="chain" id="PRO_0000059762" description="Immunoglobulin kappa variable 3-20" evidence="3 4 5 6">
    <location>
        <begin position="21"/>
        <end position="116"/>
    </location>
</feature>
<feature type="domain" description="Ig-like" evidence="2">
    <location>
        <begin position="21"/>
        <end position="116" status="greater than"/>
    </location>
</feature>
<feature type="region of interest" description="Framework-1" evidence="1">
    <location>
        <begin position="21"/>
        <end position="43"/>
    </location>
</feature>
<feature type="region of interest" description="Complementarity-determining-1" evidence="1">
    <location>
        <begin position="44"/>
        <end position="55"/>
    </location>
</feature>
<feature type="region of interest" description="Framework-2" evidence="1">
    <location>
        <begin position="56"/>
        <end position="70"/>
    </location>
</feature>
<feature type="region of interest" description="Complementarity-determining-2" evidence="1">
    <location>
        <begin position="71"/>
        <end position="77"/>
    </location>
</feature>
<feature type="region of interest" description="Framework-3" evidence="1">
    <location>
        <begin position="78"/>
        <end position="109"/>
    </location>
</feature>
<feature type="region of interest" description="Complementarity-determining-3" evidence="1">
    <location>
        <begin position="110"/>
        <end position="116" status="greater than"/>
    </location>
</feature>
<feature type="disulfide bond" evidence="2">
    <location>
        <begin position="43"/>
        <end position="109"/>
    </location>
</feature>
<feature type="sequence conflict" description="In Ref. 4." evidence="13" ref="4">
    <original>DTT</original>
    <variation>VPS</variation>
    <location>
        <begin position="17"/>
        <end position="19"/>
    </location>
</feature>
<feature type="sequence conflict" description="In Ref. 1; CAA77316." evidence="13" ref="1">
    <original>R</original>
    <variation>S</variation>
    <location>
        <position position="38"/>
    </location>
</feature>
<feature type="sequence conflict" description="In Ref. 5; AA sequence." evidence="13" ref="5">
    <original>T</original>
    <variation>A</variation>
    <location>
        <position position="40"/>
    </location>
</feature>
<feature type="sequence conflict" description="In Ref. 8; AA sequence." evidence="13" ref="8">
    <original>SQSVSSS</original>
    <variation>ALLSSRG</variation>
    <location>
        <begin position="46"/>
        <end position="52"/>
    </location>
</feature>
<feature type="sequence conflict" description="In Ref. 5; AA sequence." evidence="13" ref="5">
    <original>VSSS</original>
    <variation>LSGN</variation>
    <location>
        <begin position="49"/>
        <end position="52"/>
    </location>
</feature>
<feature type="sequence conflict" description="In Ref. 7; AA sequence and 6; AA sequence." evidence="13" ref="7 6">
    <original>S</original>
    <variation>N</variation>
    <location>
        <position position="51"/>
    </location>
</feature>
<feature type="sequence conflict" description="In Ref. 1; CAA77316." evidence="13" ref="1">
    <original>SY</original>
    <variation>N</variation>
    <location>
        <begin position="52"/>
        <end position="53"/>
    </location>
</feature>
<feature type="sequence conflict" description="In Ref. 7; AA sequence." evidence="13" ref="7">
    <original>S</original>
    <variation>G</variation>
    <location>
        <position position="52"/>
    </location>
</feature>
<feature type="sequence conflict" description="In Ref. 6; AA sequence." evidence="13" ref="6">
    <original>Y</original>
    <variation>F</variation>
    <location>
        <position position="53"/>
    </location>
</feature>
<feature type="sequence conflict" description="In Ref. 7; AA sequence." evidence="13" ref="7">
    <original>A</original>
    <variation>G</variation>
    <location>
        <position position="55"/>
    </location>
</feature>
<feature type="sequence conflict" description="In Ref. 1; CAA77316." evidence="13" ref="1">
    <original>P</original>
    <variation>R</variation>
    <location>
        <position position="61"/>
    </location>
</feature>
<feature type="sequence conflict" description="In Ref. 1; CAA77316." evidence="13" ref="1">
    <original>A</original>
    <variation>S</variation>
    <location>
        <position position="64"/>
    </location>
</feature>
<feature type="sequence conflict" description="In Ref. 5; AA sequence and 8; AA sequence." evidence="13" ref="5 8">
    <original>I</original>
    <variation>M</variation>
    <location>
        <position position="69"/>
    </location>
</feature>
<feature type="sequence conflict" description="In Ref. 1; CAA77316." evidence="13" ref="1">
    <original>YG</original>
    <variation>RD</variation>
    <location>
        <begin position="70"/>
        <end position="71"/>
    </location>
</feature>
<feature type="sequence conflict" description="In Ref. 6; AA sequence." evidence="13" ref="6">
    <original>G</original>
    <variation>V</variation>
    <location>
        <position position="71"/>
    </location>
</feature>
<feature type="sequence conflict" description="In Ref. 5; AA sequence." evidence="13" ref="5">
    <original>A</original>
    <variation>V</variation>
    <location>
        <position position="72"/>
    </location>
</feature>
<feature type="sequence conflict" description="In Ref. 4." evidence="13" ref="4">
    <original>S</original>
    <variation>T</variation>
    <location>
        <position position="73"/>
    </location>
</feature>
<feature type="sequence conflict" description="In Ref. 1; CAA77316." evidence="13" ref="1">
    <original>T</original>
    <variation>N</variation>
    <location>
        <position position="77"/>
    </location>
</feature>
<feature type="sequence conflict" description="In Ref. 4." evidence="13" ref="4">
    <original>G</original>
    <variation>A</variation>
    <location>
        <position position="87"/>
    </location>
</feature>
<feature type="sequence conflict" description="In Ref. 5; AA sequence." evidence="13" ref="5">
    <original>T</original>
    <variation>A</variation>
    <location>
        <position position="90"/>
    </location>
</feature>
<feature type="sequence conflict" description="In Ref. 1; CAA77316." evidence="13" ref="1">
    <original>T</original>
    <variation>I</variation>
    <location>
        <position position="95"/>
    </location>
</feature>
<feature type="sequence conflict" description="In Ref. 7; AA sequence." evidence="13" ref="7">
    <original>E</original>
    <variation>D</variation>
    <location>
        <position position="102"/>
    </location>
</feature>
<feature type="sequence conflict" description="In Ref. 1; CAA77316." evidence="13" ref="1">
    <original>G</original>
    <variation>S</variation>
    <location>
        <position position="113"/>
    </location>
</feature>
<feature type="sequence conflict" description="In Ref. 4." evidence="13" ref="4">
    <original>SSP</original>
    <variation>NSQ</variation>
    <location>
        <begin position="114"/>
        <end position="116"/>
    </location>
</feature>
<feature type="sequence conflict" description="In Ref. 2 and 1; CAA77316." evidence="13" ref="2 1">
    <original>S</original>
    <variation>T</variation>
    <location>
        <position position="114"/>
    </location>
</feature>
<feature type="sequence conflict" description="In Ref. 7; AA sequence." evidence="13" ref="7">
    <original>SP</original>
    <variation>LG</variation>
    <location>
        <begin position="115"/>
        <end position="116"/>
    </location>
</feature>
<feature type="non-terminal residue">
    <location>
        <position position="116"/>
    </location>
</feature>
<feature type="strand" evidence="21">
    <location>
        <begin position="24"/>
        <end position="27"/>
    </location>
</feature>
<feature type="strand" evidence="21">
    <location>
        <begin position="29"/>
        <end position="33"/>
    </location>
</feature>
<feature type="strand" evidence="21">
    <location>
        <begin position="39"/>
        <end position="47"/>
    </location>
</feature>
<feature type="helix" evidence="21">
    <location>
        <begin position="50"/>
        <end position="52"/>
    </location>
</feature>
<feature type="strand" evidence="21">
    <location>
        <begin position="54"/>
        <end position="59"/>
    </location>
</feature>
<feature type="strand" evidence="21">
    <location>
        <begin position="66"/>
        <end position="70"/>
    </location>
</feature>
<feature type="turn" evidence="21">
    <location>
        <begin position="71"/>
        <end position="73"/>
    </location>
</feature>
<feature type="strand" evidence="21">
    <location>
        <begin position="83"/>
        <end position="88"/>
    </location>
</feature>
<feature type="strand" evidence="21">
    <location>
        <begin position="91"/>
        <end position="98"/>
    </location>
</feature>
<feature type="helix" evidence="21">
    <location>
        <begin position="101"/>
        <end position="103"/>
    </location>
</feature>
<feature type="strand" evidence="21">
    <location>
        <begin position="105"/>
        <end position="111"/>
    </location>
</feature>
<feature type="strand" evidence="21">
    <location>
        <begin position="113"/>
        <end position="116"/>
    </location>
</feature>
<organism>
    <name type="scientific">Homo sapiens</name>
    <name type="common">Human</name>
    <dbReference type="NCBI Taxonomy" id="9606"/>
    <lineage>
        <taxon>Eukaryota</taxon>
        <taxon>Metazoa</taxon>
        <taxon>Chordata</taxon>
        <taxon>Craniata</taxon>
        <taxon>Vertebrata</taxon>
        <taxon>Euteleostomi</taxon>
        <taxon>Mammalia</taxon>
        <taxon>Eutheria</taxon>
        <taxon>Euarchontoglires</taxon>
        <taxon>Primates</taxon>
        <taxon>Haplorrhini</taxon>
        <taxon>Catarrhini</taxon>
        <taxon>Hominidae</taxon>
        <taxon>Homo</taxon>
    </lineage>
</organism>
<reference key="1">
    <citation type="journal article" date="1985" name="Nucleic Acids Res.">
        <title>Human immunoglobulin kappa light chain genes of subgroups II and III.</title>
        <authorList>
            <person name="Klobeck H.G."/>
            <person name="Meindl A."/>
            <person name="Combriato G."/>
            <person name="Solomon A."/>
            <person name="Zachau H.G."/>
        </authorList>
    </citation>
    <scope>NUCLEOTIDE SEQUENCE [GENOMIC DNA]</scope>
</reference>
<reference key="2">
    <citation type="journal article" date="1988" name="J. Exp. Med.">
        <title>Autoantibody-associated kappa light chain variable region gene expressed in chronic lymphocytic leukemia with little or no somatic mutation. Implications for etiology and immunotherapy.</title>
        <authorList>
            <person name="Kipps T.J."/>
            <person name="Tomhave E."/>
            <person name="Chen P.P."/>
            <person name="Carson D.A."/>
        </authorList>
    </citation>
    <scope>NUCLEOTIDE SEQUENCE [MRNA]</scope>
</reference>
<reference key="3">
    <citation type="journal article" date="2005" name="Nature">
        <title>Generation and annotation of the DNA sequences of human chromosomes 2 and 4.</title>
        <authorList>
            <person name="Hillier L.W."/>
            <person name="Graves T.A."/>
            <person name="Fulton R.S."/>
            <person name="Fulton L.A."/>
            <person name="Pepin K.H."/>
            <person name="Minx P."/>
            <person name="Wagner-McPherson C."/>
            <person name="Layman D."/>
            <person name="Wylie K."/>
            <person name="Sekhon M."/>
            <person name="Becker M.C."/>
            <person name="Fewell G.A."/>
            <person name="Delehaunty K.D."/>
            <person name="Miner T.L."/>
            <person name="Nash W.E."/>
            <person name="Kremitzki C."/>
            <person name="Oddy L."/>
            <person name="Du H."/>
            <person name="Sun H."/>
            <person name="Bradshaw-Cordum H."/>
            <person name="Ali J."/>
            <person name="Carter J."/>
            <person name="Cordes M."/>
            <person name="Harris A."/>
            <person name="Isak A."/>
            <person name="van Brunt A."/>
            <person name="Nguyen C."/>
            <person name="Du F."/>
            <person name="Courtney L."/>
            <person name="Kalicki J."/>
            <person name="Ozersky P."/>
            <person name="Abbott S."/>
            <person name="Armstrong J."/>
            <person name="Belter E.A."/>
            <person name="Caruso L."/>
            <person name="Cedroni M."/>
            <person name="Cotton M."/>
            <person name="Davidson T."/>
            <person name="Desai A."/>
            <person name="Elliott G."/>
            <person name="Erb T."/>
            <person name="Fronick C."/>
            <person name="Gaige T."/>
            <person name="Haakenson W."/>
            <person name="Haglund K."/>
            <person name="Holmes A."/>
            <person name="Harkins R."/>
            <person name="Kim K."/>
            <person name="Kruchowski S.S."/>
            <person name="Strong C.M."/>
            <person name="Grewal N."/>
            <person name="Goyea E."/>
            <person name="Hou S."/>
            <person name="Levy A."/>
            <person name="Martinka S."/>
            <person name="Mead K."/>
            <person name="McLellan M.D."/>
            <person name="Meyer R."/>
            <person name="Randall-Maher J."/>
            <person name="Tomlinson C."/>
            <person name="Dauphin-Kohlberg S."/>
            <person name="Kozlowicz-Reilly A."/>
            <person name="Shah N."/>
            <person name="Swearengen-Shahid S."/>
            <person name="Snider J."/>
            <person name="Strong J.T."/>
            <person name="Thompson J."/>
            <person name="Yoakum M."/>
            <person name="Leonard S."/>
            <person name="Pearman C."/>
            <person name="Trani L."/>
            <person name="Radionenko M."/>
            <person name="Waligorski J.E."/>
            <person name="Wang C."/>
            <person name="Rock S.M."/>
            <person name="Tin-Wollam A.-M."/>
            <person name="Maupin R."/>
            <person name="Latreille P."/>
            <person name="Wendl M.C."/>
            <person name="Yang S.-P."/>
            <person name="Pohl C."/>
            <person name="Wallis J.W."/>
            <person name="Spieth J."/>
            <person name="Bieri T.A."/>
            <person name="Berkowicz N."/>
            <person name="Nelson J.O."/>
            <person name="Osborne J."/>
            <person name="Ding L."/>
            <person name="Meyer R."/>
            <person name="Sabo A."/>
            <person name="Shotland Y."/>
            <person name="Sinha P."/>
            <person name="Wohldmann P.E."/>
            <person name="Cook L.L."/>
            <person name="Hickenbotham M.T."/>
            <person name="Eldred J."/>
            <person name="Williams D."/>
            <person name="Jones T.A."/>
            <person name="She X."/>
            <person name="Ciccarelli F.D."/>
            <person name="Izaurralde E."/>
            <person name="Taylor J."/>
            <person name="Schmutz J."/>
            <person name="Myers R.M."/>
            <person name="Cox D.R."/>
            <person name="Huang X."/>
            <person name="McPherson J.D."/>
            <person name="Mardis E.R."/>
            <person name="Clifton S.W."/>
            <person name="Warren W.C."/>
            <person name="Chinwalla A.T."/>
            <person name="Eddy S.R."/>
            <person name="Marra M.A."/>
            <person name="Ovcharenko I."/>
            <person name="Furey T.S."/>
            <person name="Miller W."/>
            <person name="Eichler E.E."/>
            <person name="Bork P."/>
            <person name="Suyama M."/>
            <person name="Torrents D."/>
            <person name="Waterston R.H."/>
            <person name="Wilson R.K."/>
        </authorList>
    </citation>
    <scope>NUCLEOTIDE SEQUENCE [LARGE SCALE GENOMIC DNA] (IMGT ALLELE IGKV3-20*01)</scope>
</reference>
<reference key="4">
    <citation type="journal article" date="1984" name="Nature">
        <title>Most kappa immunoglobulin mRNA in human lymphocytes is homologous to a small family of germ-line V genes.</title>
        <authorList>
            <person name="Bentley D.L."/>
        </authorList>
    </citation>
    <scope>NUCLEOTIDE SEQUENCE [MRNA] OF 17-116</scope>
</reference>
<reference key="5">
    <citation type="journal article" date="1969" name="FEBS Lett.">
        <title>The basic sequences of immunoglobulin kappa chains: sequence studies of Bence Jones proteins Rad, Fr4 and B6.</title>
        <authorList>
            <person name="Milstein C."/>
        </authorList>
    </citation>
    <scope>PROTEIN SEQUENCE OF 21-116</scope>
</reference>
<reference key="6">
    <citation type="journal article" date="1972" name="Hoppe-Seyler's Z. Physiol. Chem.">
        <title>Rule of antibody structure. The primary structure of a monoclonal immunoglobulin L-chain of kappa-type, subgroup 3 (Bence-Jones protein Ti). IV. The complete amino acid sequence and its significance for the mechanism of antibody production.</title>
        <authorList>
            <person name="Suter L."/>
            <person name="Barnikol H.U."/>
            <person name="Watanabe S."/>
            <person name="Hilschmann N."/>
        </authorList>
    </citation>
    <scope>PROTEIN SEQUENCE OF 21-116</scope>
</reference>
<reference key="7">
    <citation type="journal article" date="1981" name="Biochemistry">
        <title>Amino acid sequence of the variable regions of light chains from two idiotypically cross-reactive human IgM anti-gamma-globulins of the Wa group.</title>
        <authorList>
            <person name="Andrews D.W."/>
            <person name="Capra J.D."/>
        </authorList>
    </citation>
    <scope>PROTEIN SEQUENCE OF 21-116</scope>
</reference>
<reference key="8">
    <citation type="journal article" date="1986" name="Mol. Immunol.">
        <title>Amino acid sequence of a light chain variable region of a human rheumatoid factor of the Wa idiotypic group, in part predicted by its reactivity with antipeptide antibodies.</title>
        <authorList>
            <person name="Newkirk M."/>
            <person name="Chen P.P."/>
            <person name="Carson D.A."/>
            <person name="Posnett D."/>
            <person name="Capra J.D."/>
        </authorList>
    </citation>
    <scope>PROTEIN SEQUENCE OF 21-116</scope>
</reference>
<reference key="9">
    <citation type="journal article" date="2001" name="Exp. Clin. Immunogenet.">
        <title>Nomenclature of the human immunoglobulin kappa (IGK) genes.</title>
        <authorList>
            <person name="Lefranc M.P."/>
        </authorList>
    </citation>
    <scope>NOMEMCLATURE</scope>
</reference>
<reference key="10">
    <citation type="book" date="2001" name="The Immunoglobulin FactsBook.">
        <title>The Immunoglobulin FactsBook.</title>
        <editorList>
            <person name="Lefranc M.P."/>
            <person name="Lefranc G."/>
        </editorList>
        <authorList>
            <person name="Lefranc M.P."/>
            <person name="Lefranc G."/>
        </authorList>
    </citation>
    <scope>NOMENCLATURE</scope>
</reference>
<reference key="11">
    <citation type="journal article" date="2007" name="Annu. Rev. Genet.">
        <title>Immunoglobulin somatic hypermutation.</title>
        <authorList>
            <person name="Teng G."/>
            <person name="Papavasiliou F.N."/>
        </authorList>
    </citation>
    <scope>REVIEW ON SOMATIC HYPERMUTATION</scope>
</reference>
<reference key="12">
    <citation type="journal article" date="2010" name="J. Allergy Clin. Immunol.">
        <title>Structure and function of immunoglobulins.</title>
        <authorList>
            <person name="Schroeder H.W. Jr."/>
            <person name="Cavacini L."/>
        </authorList>
    </citation>
    <scope>REVIEW ON IMMUNOGLOBULINS</scope>
</reference>
<reference key="13">
    <citation type="journal article" date="2011" name="BMC Syst. Biol.">
        <title>Initial characterization of the human central proteome.</title>
        <authorList>
            <person name="Burkard T.R."/>
            <person name="Planyavsky M."/>
            <person name="Kaupe I."/>
            <person name="Breitwieser F.P."/>
            <person name="Buerckstuemmer T."/>
            <person name="Bennett K.L."/>
            <person name="Superti-Furga G."/>
            <person name="Colinge J."/>
        </authorList>
    </citation>
    <scope>IDENTIFICATION BY MASS SPECTROMETRY [LARGE SCALE ANALYSIS]</scope>
</reference>
<reference key="14">
    <citation type="journal article" date="2012" name="Nat. Rev. Immunol.">
        <title>Molecular programming of B cell memory.</title>
        <authorList>
            <person name="McHeyzer-Williams M."/>
            <person name="Okitsu S."/>
            <person name="Wang N."/>
            <person name="McHeyzer-Williams L."/>
        </authorList>
    </citation>
    <scope>REVIEW ON FUNCTION</scope>
</reference>
<reference key="15">
    <citation type="journal article" date="2014" name="Front. Immunol.">
        <title>Immunoglobulin and T Cell Receptor Genes: IMGT((R)) and the Birth and Rise of Immunoinformatics.</title>
        <authorList>
            <person name="Lefranc M.P."/>
        </authorList>
    </citation>
    <scope>NOMENCLATURE</scope>
</reference>
<evidence type="ECO:0000250" key="1">
    <source>
        <dbReference type="UniProtKB" id="P01602"/>
    </source>
</evidence>
<evidence type="ECO:0000255" key="2">
    <source>
        <dbReference type="PROSITE-ProRule" id="PRU00114"/>
    </source>
</evidence>
<evidence type="ECO:0000269" key="3">
    <source>
    </source>
</evidence>
<evidence type="ECO:0000269" key="4">
    <source>
    </source>
</evidence>
<evidence type="ECO:0000269" key="5">
    <source>
    </source>
</evidence>
<evidence type="ECO:0000269" key="6">
    <source>
    </source>
</evidence>
<evidence type="ECO:0000303" key="7">
    <source>
    </source>
</evidence>
<evidence type="ECO:0000303" key="8">
    <source>
    </source>
</evidence>
<evidence type="ECO:0000303" key="9">
    <source>
    </source>
</evidence>
<evidence type="ECO:0000303" key="10">
    <source>
    </source>
</evidence>
<evidence type="ECO:0000303" key="11">
    <source>
    </source>
</evidence>
<evidence type="ECO:0000303" key="12">
    <source ref="10"/>
</evidence>
<evidence type="ECO:0000305" key="13"/>
<evidence type="ECO:0000305" key="14">
    <source>
    </source>
</evidence>
<evidence type="ECO:0000305" key="15">
    <source>
    </source>
</evidence>
<evidence type="ECO:0000305" key="16">
    <source>
    </source>
</evidence>
<evidence type="ECO:0000305" key="17">
    <source>
    </source>
</evidence>
<evidence type="ECO:0000305" key="18">
    <source>
    </source>
</evidence>
<evidence type="ECO:0000305" key="19">
    <source>
    </source>
</evidence>
<evidence type="ECO:0000305" key="20">
    <source>
    </source>
</evidence>
<evidence type="ECO:0007829" key="21">
    <source>
        <dbReference type="PDB" id="4OB5"/>
    </source>
</evidence>